<name>SSUB2_BURO1</name>
<keyword id="KW-0067">ATP-binding</keyword>
<keyword id="KW-0997">Cell inner membrane</keyword>
<keyword id="KW-1003">Cell membrane</keyword>
<keyword id="KW-0472">Membrane</keyword>
<keyword id="KW-0547">Nucleotide-binding</keyword>
<keyword id="KW-1278">Translocase</keyword>
<keyword id="KW-0813">Transport</keyword>
<accession>Q1BG75</accession>
<reference key="1">
    <citation type="submission" date="2006-05" db="EMBL/GenBank/DDBJ databases">
        <title>Complete sequence of chromosome 3 of Burkholderia cenocepacia AU 1054.</title>
        <authorList>
            <consortium name="US DOE Joint Genome Institute"/>
            <person name="Copeland A."/>
            <person name="Lucas S."/>
            <person name="Lapidus A."/>
            <person name="Barry K."/>
            <person name="Detter J.C."/>
            <person name="Glavina del Rio T."/>
            <person name="Hammon N."/>
            <person name="Israni S."/>
            <person name="Dalin E."/>
            <person name="Tice H."/>
            <person name="Pitluck S."/>
            <person name="Chain P."/>
            <person name="Malfatti S."/>
            <person name="Shin M."/>
            <person name="Vergez L."/>
            <person name="Schmutz J."/>
            <person name="Larimer F."/>
            <person name="Land M."/>
            <person name="Hauser L."/>
            <person name="Kyrpides N."/>
            <person name="Lykidis A."/>
            <person name="LiPuma J.J."/>
            <person name="Konstantinidis K."/>
            <person name="Tiedje J.M."/>
            <person name="Richardson P."/>
        </authorList>
    </citation>
    <scope>NUCLEOTIDE SEQUENCE [LARGE SCALE GENOMIC DNA]</scope>
    <source>
        <strain>AU 1054</strain>
    </source>
</reference>
<proteinExistence type="inferred from homology"/>
<feature type="chain" id="PRO_0000279896" description="Aliphatic sulfonates import ATP-binding protein SsuB 2">
    <location>
        <begin position="1"/>
        <end position="270"/>
    </location>
</feature>
<feature type="domain" description="ABC transporter" evidence="1">
    <location>
        <begin position="17"/>
        <end position="241"/>
    </location>
</feature>
<feature type="binding site" evidence="1">
    <location>
        <begin position="50"/>
        <end position="57"/>
    </location>
    <ligand>
        <name>ATP</name>
        <dbReference type="ChEBI" id="CHEBI:30616"/>
    </ligand>
</feature>
<evidence type="ECO:0000255" key="1">
    <source>
        <dbReference type="HAMAP-Rule" id="MF_01724"/>
    </source>
</evidence>
<gene>
    <name evidence="1" type="primary">ssuB2</name>
    <name type="ordered locus">Bcen_6521</name>
</gene>
<sequence>MSASPSIRPTAGIAPPLLDLRIARKLYGDRTILSDIALQVARGEIVCVVGPSGCGKSTLLRIVAGLDPDFRGSVTLDGSALAGPSARVGVIFQEPRLLPWLSIADNVGFASGARGGRDPSVERLLDEVGLAGVARQLPATLSGGMAQRAAIARGLFGEPDLLLLDEPFSAVDAITRMRLQTLLLDVVHRHRMAAIVVTHDLDEALYLGDRVLMLAPNPGRVDDEIQVDVARPRDRRDPSLAAQRARLIDAFQRFHDRAAGDPAGIPITSA</sequence>
<protein>
    <recommendedName>
        <fullName evidence="1">Aliphatic sulfonates import ATP-binding protein SsuB 2</fullName>
        <ecNumber evidence="1">7.6.2.14</ecNumber>
    </recommendedName>
</protein>
<organism>
    <name type="scientific">Burkholderia orbicola (strain AU 1054)</name>
    <dbReference type="NCBI Taxonomy" id="331271"/>
    <lineage>
        <taxon>Bacteria</taxon>
        <taxon>Pseudomonadati</taxon>
        <taxon>Pseudomonadota</taxon>
        <taxon>Betaproteobacteria</taxon>
        <taxon>Burkholderiales</taxon>
        <taxon>Burkholderiaceae</taxon>
        <taxon>Burkholderia</taxon>
        <taxon>Burkholderia cepacia complex</taxon>
        <taxon>Burkholderia orbicola</taxon>
    </lineage>
</organism>
<comment type="function">
    <text evidence="1">Part of the ABC transporter complex SsuABC involved in aliphatic sulfonates import. Responsible for energy coupling to the transport system.</text>
</comment>
<comment type="catalytic activity">
    <reaction evidence="1">
        <text>ATP + H2O + aliphatic sulfonate-[sulfonate-binding protein]Side 1 = ADP + phosphate + aliphatic sulfonateSide 2 + [sulfonate-binding protein]Side 1.</text>
        <dbReference type="EC" id="7.6.2.14"/>
    </reaction>
</comment>
<comment type="subunit">
    <text evidence="1">The complex is composed of two ATP-binding proteins (SsuB), two transmembrane proteins (SsuC) and a solute-binding protein (SsuA).</text>
</comment>
<comment type="subcellular location">
    <subcellularLocation>
        <location evidence="1">Cell inner membrane</location>
        <topology evidence="1">Peripheral membrane protein</topology>
    </subcellularLocation>
</comment>
<comment type="similarity">
    <text evidence="1">Belongs to the ABC transporter superfamily. Aliphatic sulfonates importer (TC 3.A.1.17.2) family.</text>
</comment>
<dbReference type="EC" id="7.6.2.14" evidence="1"/>
<dbReference type="EMBL" id="CP000380">
    <property type="protein sequence ID" value="ABF81380.1"/>
    <property type="molecule type" value="Genomic_DNA"/>
</dbReference>
<dbReference type="SMR" id="Q1BG75"/>
<dbReference type="HOGENOM" id="CLU_000604_1_22_4"/>
<dbReference type="GO" id="GO:0005886">
    <property type="term" value="C:plasma membrane"/>
    <property type="evidence" value="ECO:0007669"/>
    <property type="project" value="UniProtKB-SubCell"/>
</dbReference>
<dbReference type="GO" id="GO:0005524">
    <property type="term" value="F:ATP binding"/>
    <property type="evidence" value="ECO:0007669"/>
    <property type="project" value="UniProtKB-KW"/>
</dbReference>
<dbReference type="GO" id="GO:0016887">
    <property type="term" value="F:ATP hydrolysis activity"/>
    <property type="evidence" value="ECO:0007669"/>
    <property type="project" value="InterPro"/>
</dbReference>
<dbReference type="CDD" id="cd03293">
    <property type="entry name" value="ABC_NrtD_SsuB_transporters"/>
    <property type="match status" value="1"/>
</dbReference>
<dbReference type="Gene3D" id="3.40.50.300">
    <property type="entry name" value="P-loop containing nucleotide triphosphate hydrolases"/>
    <property type="match status" value="1"/>
</dbReference>
<dbReference type="InterPro" id="IPR003593">
    <property type="entry name" value="AAA+_ATPase"/>
</dbReference>
<dbReference type="InterPro" id="IPR003439">
    <property type="entry name" value="ABC_transporter-like_ATP-bd"/>
</dbReference>
<dbReference type="InterPro" id="IPR017871">
    <property type="entry name" value="ABC_transporter-like_CS"/>
</dbReference>
<dbReference type="InterPro" id="IPR050166">
    <property type="entry name" value="ABC_transporter_ATP-bind"/>
</dbReference>
<dbReference type="InterPro" id="IPR027417">
    <property type="entry name" value="P-loop_NTPase"/>
</dbReference>
<dbReference type="PANTHER" id="PTHR42788:SF19">
    <property type="entry name" value="ALIPHATIC SULFONATES IMPORT ATP-BINDING PROTEIN SSUB 2"/>
    <property type="match status" value="1"/>
</dbReference>
<dbReference type="PANTHER" id="PTHR42788">
    <property type="entry name" value="TAURINE IMPORT ATP-BINDING PROTEIN-RELATED"/>
    <property type="match status" value="1"/>
</dbReference>
<dbReference type="Pfam" id="PF00005">
    <property type="entry name" value="ABC_tran"/>
    <property type="match status" value="1"/>
</dbReference>
<dbReference type="SMART" id="SM00382">
    <property type="entry name" value="AAA"/>
    <property type="match status" value="1"/>
</dbReference>
<dbReference type="SUPFAM" id="SSF52540">
    <property type="entry name" value="P-loop containing nucleoside triphosphate hydrolases"/>
    <property type="match status" value="1"/>
</dbReference>
<dbReference type="PROSITE" id="PS00211">
    <property type="entry name" value="ABC_TRANSPORTER_1"/>
    <property type="match status" value="1"/>
</dbReference>
<dbReference type="PROSITE" id="PS50893">
    <property type="entry name" value="ABC_TRANSPORTER_2"/>
    <property type="match status" value="1"/>
</dbReference>
<dbReference type="PROSITE" id="PS51291">
    <property type="entry name" value="SSUB"/>
    <property type="match status" value="1"/>
</dbReference>